<reference key="1">
    <citation type="submission" date="2007-05" db="EMBL/GenBank/DDBJ databases">
        <title>Complete sequence of Thermotoga petrophila RKU-1.</title>
        <authorList>
            <consortium name="US DOE Joint Genome Institute"/>
            <person name="Copeland A."/>
            <person name="Lucas S."/>
            <person name="Lapidus A."/>
            <person name="Barry K."/>
            <person name="Glavina del Rio T."/>
            <person name="Dalin E."/>
            <person name="Tice H."/>
            <person name="Pitluck S."/>
            <person name="Sims D."/>
            <person name="Brettin T."/>
            <person name="Bruce D."/>
            <person name="Detter J.C."/>
            <person name="Han C."/>
            <person name="Tapia R."/>
            <person name="Schmutz J."/>
            <person name="Larimer F."/>
            <person name="Land M."/>
            <person name="Hauser L."/>
            <person name="Kyrpides N."/>
            <person name="Mikhailova N."/>
            <person name="Nelson K."/>
            <person name="Gogarten J.P."/>
            <person name="Noll K."/>
            <person name="Richardson P."/>
        </authorList>
    </citation>
    <scope>NUCLEOTIDE SEQUENCE [LARGE SCALE GENOMIC DNA]</scope>
    <source>
        <strain>ATCC BAA-488 / DSM 13995 / JCM 10881 / RKU-1</strain>
    </source>
</reference>
<protein>
    <recommendedName>
        <fullName evidence="1">Bifunctional protein GlmU</fullName>
    </recommendedName>
    <domain>
        <recommendedName>
            <fullName evidence="1">UDP-N-acetylglucosamine pyrophosphorylase</fullName>
            <ecNumber evidence="1">2.7.7.23</ecNumber>
        </recommendedName>
        <alternativeName>
            <fullName evidence="1">N-acetylglucosamine-1-phosphate uridyltransferase</fullName>
        </alternativeName>
    </domain>
    <domain>
        <recommendedName>
            <fullName evidence="1">Glucosamine-1-phosphate N-acetyltransferase</fullName>
            <ecNumber evidence="1">2.3.1.157</ecNumber>
        </recommendedName>
    </domain>
</protein>
<sequence length="445" mass="49072">MRALVLAAGKGTRMKSKIPKVLHPLSGKPMIEWVVETAGKVAQKVGVVLGFEAELVRKTLPEWVDVFVQEEQLGTAHAVMCAKDFIEPGDDVLILYGDVPLISENTLKRMIEEHRKGADVTILVADLEDPSGYGRVIQDGDKYRIIEDADLPEELKSVTTINTGFYVFSGDFLLRVLPEIKNENAKGEYYLTDAVNFAEKVRVVKTDDLLEITGVNTRKTLVWLEEQLRMRKIEELLENGVTILDPATTYIHYSVEIGMDTVIHPMTFIEGRTRVGENCEIGPMTRIVDCEIGNNVKITRSECFKSVIEDDVSVGPFARLREGTILKKSSKIGNFVEIKKSTIGEGTKAQHLSYIGDAFVGKNVNIGAGTITCNYDGKKKNPTFIEDGAFIGSNSSLVAPVRIGEGALIGAGSVITEDVPPYSLGLGRARQVVKEGWVLKKRKEE</sequence>
<name>GLMU_THEP1</name>
<feature type="chain" id="PRO_1000056211" description="Bifunctional protein GlmU">
    <location>
        <begin position="1"/>
        <end position="445"/>
    </location>
</feature>
<feature type="region of interest" description="Pyrophosphorylase" evidence="1">
    <location>
        <begin position="1"/>
        <end position="218"/>
    </location>
</feature>
<feature type="region of interest" description="Linker" evidence="1">
    <location>
        <begin position="219"/>
        <end position="239"/>
    </location>
</feature>
<feature type="region of interest" description="N-acetyltransferase" evidence="1">
    <location>
        <begin position="240"/>
        <end position="445"/>
    </location>
</feature>
<feature type="active site" description="Proton acceptor" evidence="1">
    <location>
        <position position="351"/>
    </location>
</feature>
<feature type="binding site" evidence="1">
    <location>
        <begin position="6"/>
        <end position="9"/>
    </location>
    <ligand>
        <name>UDP-N-acetyl-alpha-D-glucosamine</name>
        <dbReference type="ChEBI" id="CHEBI:57705"/>
    </ligand>
</feature>
<feature type="binding site" evidence="1">
    <location>
        <position position="20"/>
    </location>
    <ligand>
        <name>UDP-N-acetyl-alpha-D-glucosamine</name>
        <dbReference type="ChEBI" id="CHEBI:57705"/>
    </ligand>
</feature>
<feature type="binding site" evidence="1">
    <location>
        <position position="69"/>
    </location>
    <ligand>
        <name>UDP-N-acetyl-alpha-D-glucosamine</name>
        <dbReference type="ChEBI" id="CHEBI:57705"/>
    </ligand>
</feature>
<feature type="binding site" evidence="1">
    <location>
        <begin position="74"/>
        <end position="75"/>
    </location>
    <ligand>
        <name>UDP-N-acetyl-alpha-D-glucosamine</name>
        <dbReference type="ChEBI" id="CHEBI:57705"/>
    </ligand>
</feature>
<feature type="binding site" evidence="1">
    <location>
        <begin position="96"/>
        <end position="98"/>
    </location>
    <ligand>
        <name>UDP-N-acetyl-alpha-D-glucosamine</name>
        <dbReference type="ChEBI" id="CHEBI:57705"/>
    </ligand>
</feature>
<feature type="binding site" evidence="1">
    <location>
        <position position="98"/>
    </location>
    <ligand>
        <name>Mg(2+)</name>
        <dbReference type="ChEBI" id="CHEBI:18420"/>
    </ligand>
</feature>
<feature type="binding site" evidence="1">
    <location>
        <position position="134"/>
    </location>
    <ligand>
        <name>UDP-N-acetyl-alpha-D-glucosamine</name>
        <dbReference type="ChEBI" id="CHEBI:57705"/>
    </ligand>
</feature>
<feature type="binding site" evidence="1">
    <location>
        <position position="147"/>
    </location>
    <ligand>
        <name>UDP-N-acetyl-alpha-D-glucosamine</name>
        <dbReference type="ChEBI" id="CHEBI:57705"/>
    </ligand>
</feature>
<feature type="binding site" evidence="1">
    <location>
        <position position="162"/>
    </location>
    <ligand>
        <name>UDP-N-acetyl-alpha-D-glucosamine</name>
        <dbReference type="ChEBI" id="CHEBI:57705"/>
    </ligand>
</feature>
<feature type="binding site" evidence="1">
    <location>
        <position position="216"/>
    </location>
    <ligand>
        <name>Mg(2+)</name>
        <dbReference type="ChEBI" id="CHEBI:18420"/>
    </ligand>
</feature>
<feature type="binding site" evidence="1">
    <location>
        <position position="216"/>
    </location>
    <ligand>
        <name>UDP-N-acetyl-alpha-D-glucosamine</name>
        <dbReference type="ChEBI" id="CHEBI:57705"/>
    </ligand>
</feature>
<feature type="binding site" evidence="1">
    <location>
        <position position="321"/>
    </location>
    <ligand>
        <name>UDP-N-acetyl-alpha-D-glucosamine</name>
        <dbReference type="ChEBI" id="CHEBI:57705"/>
    </ligand>
</feature>
<feature type="binding site" evidence="1">
    <location>
        <position position="339"/>
    </location>
    <ligand>
        <name>UDP-N-acetyl-alpha-D-glucosamine</name>
        <dbReference type="ChEBI" id="CHEBI:57705"/>
    </ligand>
</feature>
<feature type="binding site" evidence="1">
    <location>
        <position position="354"/>
    </location>
    <ligand>
        <name>UDP-N-acetyl-alpha-D-glucosamine</name>
        <dbReference type="ChEBI" id="CHEBI:57705"/>
    </ligand>
</feature>
<feature type="binding site" evidence="1">
    <location>
        <position position="365"/>
    </location>
    <ligand>
        <name>UDP-N-acetyl-alpha-D-glucosamine</name>
        <dbReference type="ChEBI" id="CHEBI:57705"/>
    </ligand>
</feature>
<feature type="binding site" evidence="1">
    <location>
        <position position="368"/>
    </location>
    <ligand>
        <name>acetyl-CoA</name>
        <dbReference type="ChEBI" id="CHEBI:57288"/>
    </ligand>
</feature>
<feature type="binding site" evidence="1">
    <location>
        <begin position="374"/>
        <end position="375"/>
    </location>
    <ligand>
        <name>acetyl-CoA</name>
        <dbReference type="ChEBI" id="CHEBI:57288"/>
    </ligand>
</feature>
<feature type="binding site" evidence="1">
    <location>
        <position position="393"/>
    </location>
    <ligand>
        <name>acetyl-CoA</name>
        <dbReference type="ChEBI" id="CHEBI:57288"/>
    </ligand>
</feature>
<feature type="binding site" evidence="1">
    <location>
        <position position="411"/>
    </location>
    <ligand>
        <name>acetyl-CoA</name>
        <dbReference type="ChEBI" id="CHEBI:57288"/>
    </ligand>
</feature>
<feature type="binding site" evidence="1">
    <location>
        <position position="428"/>
    </location>
    <ligand>
        <name>acetyl-CoA</name>
        <dbReference type="ChEBI" id="CHEBI:57288"/>
    </ligand>
</feature>
<organism>
    <name type="scientific">Thermotoga petrophila (strain ATCC BAA-488 / DSM 13995 / JCM 10881 / RKU-1)</name>
    <dbReference type="NCBI Taxonomy" id="390874"/>
    <lineage>
        <taxon>Bacteria</taxon>
        <taxon>Thermotogati</taxon>
        <taxon>Thermotogota</taxon>
        <taxon>Thermotogae</taxon>
        <taxon>Thermotogales</taxon>
        <taxon>Thermotogaceae</taxon>
        <taxon>Thermotoga</taxon>
    </lineage>
</organism>
<evidence type="ECO:0000255" key="1">
    <source>
        <dbReference type="HAMAP-Rule" id="MF_01631"/>
    </source>
</evidence>
<accession>A5ILV3</accession>
<dbReference type="EC" id="2.7.7.23" evidence="1"/>
<dbReference type="EC" id="2.3.1.157" evidence="1"/>
<dbReference type="EMBL" id="CP000702">
    <property type="protein sequence ID" value="ABQ47176.1"/>
    <property type="molecule type" value="Genomic_DNA"/>
</dbReference>
<dbReference type="RefSeq" id="WP_011943690.1">
    <property type="nucleotide sequence ID" value="NC_009486.1"/>
</dbReference>
<dbReference type="SMR" id="A5ILV3"/>
<dbReference type="STRING" id="390874.Tpet_1162"/>
<dbReference type="KEGG" id="tpt:Tpet_1162"/>
<dbReference type="eggNOG" id="COG1207">
    <property type="taxonomic scope" value="Bacteria"/>
</dbReference>
<dbReference type="HOGENOM" id="CLU_029499_15_2_0"/>
<dbReference type="UniPathway" id="UPA00113">
    <property type="reaction ID" value="UER00532"/>
</dbReference>
<dbReference type="UniPathway" id="UPA00113">
    <property type="reaction ID" value="UER00533"/>
</dbReference>
<dbReference type="UniPathway" id="UPA00973"/>
<dbReference type="Proteomes" id="UP000006558">
    <property type="component" value="Chromosome"/>
</dbReference>
<dbReference type="GO" id="GO:0005737">
    <property type="term" value="C:cytoplasm"/>
    <property type="evidence" value="ECO:0007669"/>
    <property type="project" value="UniProtKB-SubCell"/>
</dbReference>
<dbReference type="GO" id="GO:0016020">
    <property type="term" value="C:membrane"/>
    <property type="evidence" value="ECO:0007669"/>
    <property type="project" value="GOC"/>
</dbReference>
<dbReference type="GO" id="GO:0019134">
    <property type="term" value="F:glucosamine-1-phosphate N-acetyltransferase activity"/>
    <property type="evidence" value="ECO:0007669"/>
    <property type="project" value="UniProtKB-UniRule"/>
</dbReference>
<dbReference type="GO" id="GO:0000287">
    <property type="term" value="F:magnesium ion binding"/>
    <property type="evidence" value="ECO:0007669"/>
    <property type="project" value="UniProtKB-UniRule"/>
</dbReference>
<dbReference type="GO" id="GO:0003977">
    <property type="term" value="F:UDP-N-acetylglucosamine diphosphorylase activity"/>
    <property type="evidence" value="ECO:0007669"/>
    <property type="project" value="UniProtKB-UniRule"/>
</dbReference>
<dbReference type="GO" id="GO:0000902">
    <property type="term" value="P:cell morphogenesis"/>
    <property type="evidence" value="ECO:0007669"/>
    <property type="project" value="UniProtKB-UniRule"/>
</dbReference>
<dbReference type="GO" id="GO:0071555">
    <property type="term" value="P:cell wall organization"/>
    <property type="evidence" value="ECO:0007669"/>
    <property type="project" value="UniProtKB-KW"/>
</dbReference>
<dbReference type="GO" id="GO:0009245">
    <property type="term" value="P:lipid A biosynthetic process"/>
    <property type="evidence" value="ECO:0007669"/>
    <property type="project" value="UniProtKB-UniRule"/>
</dbReference>
<dbReference type="GO" id="GO:0009252">
    <property type="term" value="P:peptidoglycan biosynthetic process"/>
    <property type="evidence" value="ECO:0007669"/>
    <property type="project" value="UniProtKB-UniRule"/>
</dbReference>
<dbReference type="GO" id="GO:0008360">
    <property type="term" value="P:regulation of cell shape"/>
    <property type="evidence" value="ECO:0007669"/>
    <property type="project" value="UniProtKB-KW"/>
</dbReference>
<dbReference type="GO" id="GO:0006048">
    <property type="term" value="P:UDP-N-acetylglucosamine biosynthetic process"/>
    <property type="evidence" value="ECO:0007669"/>
    <property type="project" value="UniProtKB-UniPathway"/>
</dbReference>
<dbReference type="CDD" id="cd02540">
    <property type="entry name" value="GT2_GlmU_N_bac"/>
    <property type="match status" value="1"/>
</dbReference>
<dbReference type="CDD" id="cd03353">
    <property type="entry name" value="LbH_GlmU_C"/>
    <property type="match status" value="1"/>
</dbReference>
<dbReference type="Gene3D" id="2.160.10.10">
    <property type="entry name" value="Hexapeptide repeat proteins"/>
    <property type="match status" value="1"/>
</dbReference>
<dbReference type="Gene3D" id="3.90.550.10">
    <property type="entry name" value="Spore Coat Polysaccharide Biosynthesis Protein SpsA, Chain A"/>
    <property type="match status" value="1"/>
</dbReference>
<dbReference type="HAMAP" id="MF_01631">
    <property type="entry name" value="GlmU"/>
    <property type="match status" value="1"/>
</dbReference>
<dbReference type="InterPro" id="IPR005882">
    <property type="entry name" value="Bifunctional_GlmU"/>
</dbReference>
<dbReference type="InterPro" id="IPR050065">
    <property type="entry name" value="GlmU-like"/>
</dbReference>
<dbReference type="InterPro" id="IPR038009">
    <property type="entry name" value="GlmU_C_LbH"/>
</dbReference>
<dbReference type="InterPro" id="IPR001451">
    <property type="entry name" value="Hexapep"/>
</dbReference>
<dbReference type="InterPro" id="IPR018357">
    <property type="entry name" value="Hexapep_transf_CS"/>
</dbReference>
<dbReference type="InterPro" id="IPR025877">
    <property type="entry name" value="MobA-like_NTP_Trfase"/>
</dbReference>
<dbReference type="InterPro" id="IPR029044">
    <property type="entry name" value="Nucleotide-diphossugar_trans"/>
</dbReference>
<dbReference type="InterPro" id="IPR011004">
    <property type="entry name" value="Trimer_LpxA-like_sf"/>
</dbReference>
<dbReference type="NCBIfam" id="TIGR01173">
    <property type="entry name" value="glmU"/>
    <property type="match status" value="1"/>
</dbReference>
<dbReference type="NCBIfam" id="NF010937">
    <property type="entry name" value="PRK14357.1"/>
    <property type="match status" value="1"/>
</dbReference>
<dbReference type="PANTHER" id="PTHR43584:SF3">
    <property type="entry name" value="BIFUNCTIONAL PROTEIN GLMU"/>
    <property type="match status" value="1"/>
</dbReference>
<dbReference type="PANTHER" id="PTHR43584">
    <property type="entry name" value="NUCLEOTIDYL TRANSFERASE"/>
    <property type="match status" value="1"/>
</dbReference>
<dbReference type="Pfam" id="PF00132">
    <property type="entry name" value="Hexapep"/>
    <property type="match status" value="1"/>
</dbReference>
<dbReference type="Pfam" id="PF12804">
    <property type="entry name" value="NTP_transf_3"/>
    <property type="match status" value="1"/>
</dbReference>
<dbReference type="SUPFAM" id="SSF53448">
    <property type="entry name" value="Nucleotide-diphospho-sugar transferases"/>
    <property type="match status" value="1"/>
</dbReference>
<dbReference type="SUPFAM" id="SSF51161">
    <property type="entry name" value="Trimeric LpxA-like enzymes"/>
    <property type="match status" value="1"/>
</dbReference>
<dbReference type="PROSITE" id="PS00101">
    <property type="entry name" value="HEXAPEP_TRANSFERASES"/>
    <property type="match status" value="1"/>
</dbReference>
<gene>
    <name evidence="1" type="primary">glmU</name>
    <name type="ordered locus">Tpet_1162</name>
</gene>
<comment type="function">
    <text evidence="1">Catalyzes the last two sequential reactions in the de novo biosynthetic pathway for UDP-N-acetylglucosamine (UDP-GlcNAc). The C-terminal domain catalyzes the transfer of acetyl group from acetyl coenzyme A to glucosamine-1-phosphate (GlcN-1-P) to produce N-acetylglucosamine-1-phosphate (GlcNAc-1-P), which is converted into UDP-GlcNAc by the transfer of uridine 5-monophosphate (from uridine 5-triphosphate), a reaction catalyzed by the N-terminal domain.</text>
</comment>
<comment type="catalytic activity">
    <reaction evidence="1">
        <text>alpha-D-glucosamine 1-phosphate + acetyl-CoA = N-acetyl-alpha-D-glucosamine 1-phosphate + CoA + H(+)</text>
        <dbReference type="Rhea" id="RHEA:13725"/>
        <dbReference type="ChEBI" id="CHEBI:15378"/>
        <dbReference type="ChEBI" id="CHEBI:57287"/>
        <dbReference type="ChEBI" id="CHEBI:57288"/>
        <dbReference type="ChEBI" id="CHEBI:57776"/>
        <dbReference type="ChEBI" id="CHEBI:58516"/>
        <dbReference type="EC" id="2.3.1.157"/>
    </reaction>
</comment>
<comment type="catalytic activity">
    <reaction evidence="1">
        <text>N-acetyl-alpha-D-glucosamine 1-phosphate + UTP + H(+) = UDP-N-acetyl-alpha-D-glucosamine + diphosphate</text>
        <dbReference type="Rhea" id="RHEA:13509"/>
        <dbReference type="ChEBI" id="CHEBI:15378"/>
        <dbReference type="ChEBI" id="CHEBI:33019"/>
        <dbReference type="ChEBI" id="CHEBI:46398"/>
        <dbReference type="ChEBI" id="CHEBI:57705"/>
        <dbReference type="ChEBI" id="CHEBI:57776"/>
        <dbReference type="EC" id="2.7.7.23"/>
    </reaction>
</comment>
<comment type="cofactor">
    <cofactor evidence="1">
        <name>Mg(2+)</name>
        <dbReference type="ChEBI" id="CHEBI:18420"/>
    </cofactor>
    <text evidence="1">Binds 1 Mg(2+) ion per subunit.</text>
</comment>
<comment type="pathway">
    <text evidence="1">Nucleotide-sugar biosynthesis; UDP-N-acetyl-alpha-D-glucosamine biosynthesis; N-acetyl-alpha-D-glucosamine 1-phosphate from alpha-D-glucosamine 6-phosphate (route II): step 2/2.</text>
</comment>
<comment type="pathway">
    <text evidence="1">Nucleotide-sugar biosynthesis; UDP-N-acetyl-alpha-D-glucosamine biosynthesis; UDP-N-acetyl-alpha-D-glucosamine from N-acetyl-alpha-D-glucosamine 1-phosphate: step 1/1.</text>
</comment>
<comment type="pathway">
    <text evidence="1">Bacterial outer membrane biogenesis; LPS lipid A biosynthesis.</text>
</comment>
<comment type="subunit">
    <text evidence="1">Homotrimer.</text>
</comment>
<comment type="subcellular location">
    <subcellularLocation>
        <location evidence="1">Cytoplasm</location>
    </subcellularLocation>
</comment>
<comment type="similarity">
    <text evidence="1">In the N-terminal section; belongs to the N-acetylglucosamine-1-phosphate uridyltransferase family.</text>
</comment>
<comment type="similarity">
    <text evidence="1">In the C-terminal section; belongs to the transferase hexapeptide repeat family.</text>
</comment>
<keyword id="KW-0012">Acyltransferase</keyword>
<keyword id="KW-0133">Cell shape</keyword>
<keyword id="KW-0961">Cell wall biogenesis/degradation</keyword>
<keyword id="KW-0963">Cytoplasm</keyword>
<keyword id="KW-0460">Magnesium</keyword>
<keyword id="KW-0479">Metal-binding</keyword>
<keyword id="KW-0511">Multifunctional enzyme</keyword>
<keyword id="KW-0548">Nucleotidyltransferase</keyword>
<keyword id="KW-0573">Peptidoglycan synthesis</keyword>
<keyword id="KW-0677">Repeat</keyword>
<keyword id="KW-0808">Transferase</keyword>
<proteinExistence type="inferred from homology"/>